<protein>
    <recommendedName>
        <fullName evidence="10">Transcription factor zip-2</fullName>
    </recommendedName>
</protein>
<reference evidence="11" key="1">
    <citation type="journal article" date="1998" name="Science">
        <title>Genome sequence of the nematode C. elegans: a platform for investigating biology.</title>
        <authorList>
            <consortium name="The C. elegans sequencing consortium"/>
        </authorList>
    </citation>
    <scope>NUCLEOTIDE SEQUENCE [LARGE SCALE GENOMIC DNA]</scope>
    <source>
        <strain evidence="11">Bristol N2</strain>
    </source>
</reference>
<reference evidence="10" key="2">
    <citation type="journal article" date="2010" name="Proc. Natl. Acad. Sci. U.S.A.">
        <title>bZIP transcription factor zip-2 mediates an early response to Pseudomonas aeruginosa infection in Caenorhabditis elegans.</title>
        <authorList>
            <person name="Estes K.A."/>
            <person name="Dunbar T.L."/>
            <person name="Powell J.R."/>
            <person name="Ausubel F.M."/>
            <person name="Troemel E.R."/>
        </authorList>
    </citation>
    <scope>FUNCTION</scope>
    <scope>TISSUE SPECIFICITY</scope>
    <scope>INDUCTION BY P.AERUGINOSA INFECTION</scope>
    <scope>DISRUPTION PHENOTYPE</scope>
</reference>
<reference evidence="10" key="3">
    <citation type="journal article" date="2012" name="Cell Host Microbe">
        <title>Host translational inhibition by Pseudomonas aeruginosa Exotoxin A Triggers an immune response in Caenorhabditis elegans.</title>
        <authorList>
            <person name="McEwan D.L."/>
            <person name="Kirienko N.V."/>
            <person name="Ausubel F.M."/>
        </authorList>
    </citation>
    <scope>FUNCTION</scope>
    <scope>INDUCTION BY P.AERUGINOSA INFECTION</scope>
</reference>
<reference evidence="10" key="4">
    <citation type="journal article" date="2012" name="Cell Host Microbe">
        <title>C. elegans detects pathogen-induced translational inhibition to activate immune signaling.</title>
        <authorList>
            <person name="Dunbar T.L."/>
            <person name="Yan Z."/>
            <person name="Balla K.M."/>
            <person name="Smelkinson M.G."/>
            <person name="Troemel E.R."/>
        </authorList>
    </citation>
    <scope>FUNCTION</scope>
    <scope>SUBCELLULAR LOCATION</scope>
    <scope>TISSUE SPECIFICITY</scope>
    <scope>INDUCTION BY P.AERUGINOSA INFECTION; EXOTOXIN A AND CYCLOHEXIMIDE</scope>
</reference>
<reference evidence="10" key="5">
    <citation type="journal article" date="2016" name="Cell Rep.">
        <title>The C. elegans CCAAT-Enhancer-Binding Protein Gamma Is Required for Surveillance Immunity.</title>
        <authorList>
            <person name="Reddy K.C."/>
            <person name="Dunbar T.L."/>
            <person name="Nargund A.M."/>
            <person name="Haynes C.M."/>
            <person name="Troemel E.R."/>
        </authorList>
    </citation>
    <scope>FUNCTION</scope>
    <scope>SUBCELLULAR LOCATION</scope>
    <scope>INDUCTION BY P.AERUGINOSA INFECTION</scope>
    <scope>DISRUPTION PHENOTYPE</scope>
</reference>
<reference evidence="10" key="6">
    <citation type="journal article" date="2017" name="PLoS Genet.">
        <title>A conserved mitochondrial surveillance pathway is required for defense against Pseudomonas aeruginosa.</title>
        <authorList>
            <person name="Tjahjono E."/>
            <person name="Kirienko N.V."/>
        </authorList>
    </citation>
    <scope>FUNCTION</scope>
    <scope>DISRUPTION PHENOTYPE</scope>
</reference>
<reference evidence="10" key="7">
    <citation type="journal article" date="2020" name="Aging (Albany NY)">
        <title>A cellular surveillance and defense system that delays aging phenotypes in C. elegans.</title>
        <authorList>
            <person name="Hahm J.H."/>
            <person name="Jeong C."/>
            <person name="Lee W."/>
            <person name="Koo H.J."/>
            <person name="Kim S."/>
            <person name="Hwang D."/>
            <person name="Nam H.G."/>
        </authorList>
    </citation>
    <scope>FUNCTION</scope>
    <scope>DISRUPTION PHENOTYPE</scope>
</reference>
<comment type="function">
    <text evidence="1 4 5 6 7 8 9">Transcription factor that binds to the promoter and the enhancer regions of target genes (By similarity). May act together with the bZIP transcription factor, cebp-2 (PubMed:26876169). Involved in responding to mitochondrial damage (PubMed:28662060, PubMed:32350153). Plays a role in the delay of age-associated mitochondrial fragmentation and muscle decline (PubMed:32350153). Has a protective role in response to infection by the Gram-negative bacterium P.aeruginosa (PubMed:20133860, PubMed:22520465, PubMed:26876169, PubMed:28662060). Required to prevent P.aeruginosa ToxA-mediated lethality (PubMed:22520464, PubMed:22520465). Required for the activation of several infection response genes including irg-1 and irg-2 following P.aeruginosa infection; target gene activation may involve effects of the bacterial toxin, ToxA, and perhaps other toxins (PubMed:20133860, PubMed:22520465).</text>
</comment>
<comment type="interaction">
    <interactant intactId="EBI-6731556">
        <id>Q21148</id>
    </interactant>
    <interactant intactId="EBI-317743">
        <id>Q21361</id>
        <label>atf-2</label>
    </interactant>
    <organismsDiffer>false</organismsDiffer>
    <experiments>2</experiments>
</comment>
<comment type="interaction">
    <interactant intactId="EBI-6731556">
        <id>Q21148</id>
    </interactant>
    <interactant intactId="EBI-2914231">
        <id>Q8IG69</id>
        <label>cebp-2</label>
    </interactant>
    <organismsDiffer>false</organismsDiffer>
    <experiments>3</experiments>
</comment>
<comment type="subcellular location">
    <subcellularLocation>
        <location evidence="6 7">Nucleus</location>
    </subcellularLocation>
</comment>
<comment type="tissue specificity">
    <text evidence="4 6">Expressed in the pharynx and throughout the intestine.</text>
</comment>
<comment type="induction">
    <text evidence="4 5 6 7">Induced by P.aeruginosa infection (PubMed:20133860, PubMed:22520464, PubMed:22520465, PubMed:26876169). Induced by translational inhibitors such as cycloheximide and exogenous or P.aeruginosa-derived ToxA (PubMed:22520465).</text>
</comment>
<comment type="disruption phenotype">
    <text evidence="4 7 8 9">RNAi-mediated knockdown increases the proportion of aged worms with fragmented mitochondria from 5% to 59% and causes a 30% decrease in cellular ATP levels at day 8 in adult (PubMed:32350153). RNAi-mediated knockdown decreases survival upon infection with P.aeruginosa (PubMed:20133860, PubMed:28662060). RNAi-mediated knockdown reduces induction of expression of infection response gene, irg-1, in response to P.aeruginosa (PubMed:20133860, PubMed:26876169).</text>
</comment>
<comment type="similarity">
    <text evidence="10">Belongs to the bZIP family. C/EBP subfamily.</text>
</comment>
<dbReference type="EMBL" id="BX284603">
    <property type="protein sequence ID" value="CCD61873.1"/>
    <property type="molecule type" value="Genomic_DNA"/>
</dbReference>
<dbReference type="RefSeq" id="NP_001370329.1">
    <property type="nucleotide sequence ID" value="NM_001384015.2"/>
</dbReference>
<dbReference type="RefSeq" id="NP_497269.1">
    <property type="nucleotide sequence ID" value="NM_064868.3"/>
</dbReference>
<dbReference type="SMR" id="Q21148"/>
<dbReference type="FunCoup" id="Q21148">
    <property type="interactions" value="1305"/>
</dbReference>
<dbReference type="IntAct" id="Q21148">
    <property type="interactions" value="13"/>
</dbReference>
<dbReference type="STRING" id="6239.K02F3.4.2"/>
<dbReference type="PaxDb" id="6239-K02F3.4.2"/>
<dbReference type="EnsemblMetazoa" id="K02F3.4.1">
    <property type="protein sequence ID" value="K02F3.4.1"/>
    <property type="gene ID" value="WBGene00019327"/>
</dbReference>
<dbReference type="EnsemblMetazoa" id="K02F3.4.2">
    <property type="protein sequence ID" value="K02F3.4.2"/>
    <property type="gene ID" value="WBGene00019327"/>
</dbReference>
<dbReference type="EnsemblMetazoa" id="K02F3.4.3">
    <property type="protein sequence ID" value="K02F3.4.3"/>
    <property type="gene ID" value="WBGene00019327"/>
</dbReference>
<dbReference type="GeneID" id="175240"/>
<dbReference type="UCSC" id="K02F3.4.2">
    <property type="organism name" value="c. elegans"/>
</dbReference>
<dbReference type="AGR" id="WB:WBGene00019327"/>
<dbReference type="WormBase" id="K02F3.4">
    <property type="protein sequence ID" value="CE23848"/>
    <property type="gene ID" value="WBGene00019327"/>
    <property type="gene designation" value="zip-2"/>
</dbReference>
<dbReference type="eggNOG" id="ENOG502SBKU">
    <property type="taxonomic scope" value="Eukaryota"/>
</dbReference>
<dbReference type="HOGENOM" id="CLU_892060_0_0_1"/>
<dbReference type="InParanoid" id="Q21148"/>
<dbReference type="OMA" id="VMMFVKR"/>
<dbReference type="OrthoDB" id="10039716at2759"/>
<dbReference type="PRO" id="PR:Q21148"/>
<dbReference type="Proteomes" id="UP000001940">
    <property type="component" value="Chromosome III"/>
</dbReference>
<dbReference type="Bgee" id="WBGene00019327">
    <property type="expression patterns" value="Expressed in pharyngeal muscle cell (C elegans) and 3 other cell types or tissues"/>
</dbReference>
<dbReference type="GO" id="GO:0005634">
    <property type="term" value="C:nucleus"/>
    <property type="evidence" value="ECO:0007669"/>
    <property type="project" value="UniProtKB-SubCell"/>
</dbReference>
<dbReference type="GO" id="GO:0000981">
    <property type="term" value="F:DNA-binding transcription factor activity, RNA polymerase II-specific"/>
    <property type="evidence" value="ECO:0000318"/>
    <property type="project" value="GO_Central"/>
</dbReference>
<dbReference type="GO" id="GO:0000978">
    <property type="term" value="F:RNA polymerase II cis-regulatory region sequence-specific DNA binding"/>
    <property type="evidence" value="ECO:0000318"/>
    <property type="project" value="GO_Central"/>
</dbReference>
<dbReference type="GO" id="GO:0140367">
    <property type="term" value="P:antibacterial innate immune response"/>
    <property type="evidence" value="ECO:0000315"/>
    <property type="project" value="WormBase"/>
</dbReference>
<dbReference type="GO" id="GO:0050829">
    <property type="term" value="P:defense response to Gram-negative bacterium"/>
    <property type="evidence" value="ECO:0000315"/>
    <property type="project" value="UniProtKB"/>
</dbReference>
<dbReference type="GO" id="GO:0006351">
    <property type="term" value="P:DNA-templated transcription"/>
    <property type="evidence" value="ECO:0007669"/>
    <property type="project" value="InterPro"/>
</dbReference>
<dbReference type="GO" id="GO:0010628">
    <property type="term" value="P:positive regulation of gene expression"/>
    <property type="evidence" value="ECO:0000315"/>
    <property type="project" value="UniProtKB"/>
</dbReference>
<dbReference type="GO" id="GO:0045944">
    <property type="term" value="P:positive regulation of transcription by RNA polymerase II"/>
    <property type="evidence" value="ECO:0000315"/>
    <property type="project" value="WormBase"/>
</dbReference>
<dbReference type="GO" id="GO:0006357">
    <property type="term" value="P:regulation of transcription by RNA polymerase II"/>
    <property type="evidence" value="ECO:0000318"/>
    <property type="project" value="GO_Central"/>
</dbReference>
<dbReference type="CDD" id="cd14813">
    <property type="entry name" value="bZIP_BmCbz-like"/>
    <property type="match status" value="1"/>
</dbReference>
<dbReference type="FunFam" id="1.20.5.170:FF:000158">
    <property type="entry name" value="BZIP transcription factor family"/>
    <property type="match status" value="1"/>
</dbReference>
<dbReference type="Gene3D" id="1.20.5.170">
    <property type="match status" value="1"/>
</dbReference>
<dbReference type="InterPro" id="IPR004827">
    <property type="entry name" value="bZIP"/>
</dbReference>
<dbReference type="InterPro" id="IPR046347">
    <property type="entry name" value="bZIP_sf"/>
</dbReference>
<dbReference type="InterPro" id="IPR031106">
    <property type="entry name" value="C/EBP"/>
</dbReference>
<dbReference type="PANTHER" id="PTHR23334">
    <property type="entry name" value="CCAAT/ENHANCER BINDING PROTEIN"/>
    <property type="match status" value="1"/>
</dbReference>
<dbReference type="PANTHER" id="PTHR23334:SF72">
    <property type="entry name" value="PROTEIN MABIKI"/>
    <property type="match status" value="1"/>
</dbReference>
<dbReference type="Pfam" id="PF07716">
    <property type="entry name" value="bZIP_2"/>
    <property type="match status" value="1"/>
</dbReference>
<dbReference type="SUPFAM" id="SSF57959">
    <property type="entry name" value="Leucine zipper domain"/>
    <property type="match status" value="1"/>
</dbReference>
<dbReference type="PROSITE" id="PS50217">
    <property type="entry name" value="BZIP"/>
    <property type="match status" value="1"/>
</dbReference>
<dbReference type="PROSITE" id="PS00036">
    <property type="entry name" value="BZIP_BASIC"/>
    <property type="match status" value="1"/>
</dbReference>
<feature type="chain" id="PRO_0000451176" description="Transcription factor zip-2">
    <location>
        <begin position="1"/>
        <end position="308"/>
    </location>
</feature>
<feature type="domain" description="bZIP" evidence="2">
    <location>
        <begin position="242"/>
        <end position="305"/>
    </location>
</feature>
<feature type="region of interest" description="Disordered" evidence="3">
    <location>
        <begin position="217"/>
        <end position="277"/>
    </location>
</feature>
<feature type="region of interest" description="Basic motif" evidence="2">
    <location>
        <begin position="246"/>
        <end position="276"/>
    </location>
</feature>
<feature type="region of interest" description="Leucine-zipper" evidence="2">
    <location>
        <begin position="277"/>
        <end position="291"/>
    </location>
</feature>
<feature type="compositionally biased region" description="Polar residues" evidence="3">
    <location>
        <begin position="217"/>
        <end position="229"/>
    </location>
</feature>
<feature type="compositionally biased region" description="Basic and acidic residues" evidence="3">
    <location>
        <begin position="266"/>
        <end position="277"/>
    </location>
</feature>
<evidence type="ECO:0000250" key="1">
    <source>
        <dbReference type="UniProtKB" id="P53567"/>
    </source>
</evidence>
<evidence type="ECO:0000255" key="2">
    <source>
        <dbReference type="PROSITE-ProRule" id="PRU00978"/>
    </source>
</evidence>
<evidence type="ECO:0000256" key="3">
    <source>
        <dbReference type="SAM" id="MobiDB-lite"/>
    </source>
</evidence>
<evidence type="ECO:0000269" key="4">
    <source>
    </source>
</evidence>
<evidence type="ECO:0000269" key="5">
    <source>
    </source>
</evidence>
<evidence type="ECO:0000269" key="6">
    <source>
    </source>
</evidence>
<evidence type="ECO:0000269" key="7">
    <source>
    </source>
</evidence>
<evidence type="ECO:0000269" key="8">
    <source>
    </source>
</evidence>
<evidence type="ECO:0000269" key="9">
    <source>
    </source>
</evidence>
<evidence type="ECO:0000305" key="10"/>
<evidence type="ECO:0000312" key="11">
    <source>
        <dbReference type="Proteomes" id="UP000001940"/>
    </source>
</evidence>
<evidence type="ECO:0000312" key="12">
    <source>
        <dbReference type="WormBase" id="K02F3.4"/>
    </source>
</evidence>
<gene>
    <name evidence="12" type="primary">zip-2</name>
    <name evidence="12" type="ORF">K02F3.4</name>
</gene>
<keyword id="KW-0238">DNA-binding</keyword>
<keyword id="KW-0391">Immunity</keyword>
<keyword id="KW-0399">Innate immunity</keyword>
<keyword id="KW-0539">Nucleus</keyword>
<keyword id="KW-1185">Reference proteome</keyword>
<keyword id="KW-0804">Transcription</keyword>
<keyword id="KW-0805">Transcription regulation</keyword>
<name>ZIP2_CAEEL</name>
<accession>Q21148</accession>
<proteinExistence type="evidence at protein level"/>
<organism evidence="11">
    <name type="scientific">Caenorhabditis elegans</name>
    <dbReference type="NCBI Taxonomy" id="6239"/>
    <lineage>
        <taxon>Eukaryota</taxon>
        <taxon>Metazoa</taxon>
        <taxon>Ecdysozoa</taxon>
        <taxon>Nematoda</taxon>
        <taxon>Chromadorea</taxon>
        <taxon>Rhabditida</taxon>
        <taxon>Rhabditina</taxon>
        <taxon>Rhabditomorpha</taxon>
        <taxon>Rhabditoidea</taxon>
        <taxon>Rhabditidae</taxon>
        <taxon>Peloderinae</taxon>
        <taxon>Caenorhabditis</taxon>
    </lineage>
</organism>
<sequence length="308" mass="34454">MEPLSAPLAVGFSAWPPSPPLPPLAHSPLQDAVHADHNHRRILNSCRNLPDCLTTTVPQLHQINSAEQSPLQFTHQPNCDLIVVLDEQTTYTTTMTRRSLPKADRYLSEPNMSTPQASHGSFEFDVPEYTSFDYAFDFPPVPEAFPPAANSSSAASPDADFLDLDSLMSCDITSLDAYIHDDSIASPSNASHISPPASDIDPVDEFFPQLVHNNKIQSSSSSTVETTITRGRKTSSVSSDSSSDYRHKRDKNNLASQKSRQKRQAKIRESKEERERLEKRKVQLQAMVLTLETQVEDYKRLVMMFVKR</sequence>